<evidence type="ECO:0000255" key="1">
    <source>
        <dbReference type="HAMAP-Rule" id="MF_01805"/>
    </source>
</evidence>
<evidence type="ECO:0000305" key="2"/>
<sequence>MYEVKLDAFNGPLDLLLHLIQKFEIDIYDIPMQALTEQYMQYVHAMKQLEINIASEYLVLASELLMIKSKMLLPQSTSDMDVDDDPREDLVGRLIEYQNYKEYTAILNDMKEERDFYFTKRPTDLSHLETDESWDPNHTIDLTELIVAYQRVKNRVELNTPKSVEIRKETFTIQQATEQVTSRLKDKDHFNFFSLFTFSEPIEQVVTHFLAILEMSKAGIINIEQQRNFEDINIIRGVNYHFG</sequence>
<comment type="function">
    <text evidence="1">Participates in chromosomal partition during cell division. May act via the formation of a condensin-like complex containing Smc and ScpB that pull DNA away from mid-cell into both cell halves.</text>
</comment>
<comment type="subunit">
    <text evidence="1">Component of a cohesin-like complex composed of ScpA, ScpB and the Smc homodimer, in which ScpA and ScpB bind to the head domain of Smc. The presence of the three proteins is required for the association of the complex with DNA.</text>
</comment>
<comment type="subcellular location">
    <subcellularLocation>
        <location evidence="1">Cytoplasm</location>
    </subcellularLocation>
    <text evidence="1">Associated with two foci at the outer edges of the nucleoid region in young cells, and at four foci within both cell halves in older cells.</text>
</comment>
<comment type="similarity">
    <text evidence="1">Belongs to the ScpA family.</text>
</comment>
<comment type="sequence caution" evidence="2">
    <conflict type="erroneous initiation">
        <sequence resource="EMBL-CDS" id="BAB57657"/>
    </conflict>
</comment>
<feature type="chain" id="PRO_0000211101" description="Segregation and condensation protein A">
    <location>
        <begin position="1"/>
        <end position="243"/>
    </location>
</feature>
<keyword id="KW-0131">Cell cycle</keyword>
<keyword id="KW-0132">Cell division</keyword>
<keyword id="KW-0159">Chromosome partition</keyword>
<keyword id="KW-0963">Cytoplasm</keyword>
<dbReference type="EMBL" id="BA000017">
    <property type="protein sequence ID" value="BAB57657.1"/>
    <property type="status" value="ALT_INIT"/>
    <property type="molecule type" value="Genomic_DNA"/>
</dbReference>
<dbReference type="RefSeq" id="WP_000273371.1">
    <property type="nucleotide sequence ID" value="NC_002758.2"/>
</dbReference>
<dbReference type="SMR" id="P60223"/>
<dbReference type="KEGG" id="sav:SAV1495"/>
<dbReference type="HOGENOM" id="CLU_038686_3_1_9"/>
<dbReference type="Proteomes" id="UP000002481">
    <property type="component" value="Chromosome"/>
</dbReference>
<dbReference type="GO" id="GO:0005737">
    <property type="term" value="C:cytoplasm"/>
    <property type="evidence" value="ECO:0007669"/>
    <property type="project" value="UniProtKB-SubCell"/>
</dbReference>
<dbReference type="GO" id="GO:0051301">
    <property type="term" value="P:cell division"/>
    <property type="evidence" value="ECO:0007669"/>
    <property type="project" value="UniProtKB-KW"/>
</dbReference>
<dbReference type="GO" id="GO:0007059">
    <property type="term" value="P:chromosome segregation"/>
    <property type="evidence" value="ECO:0007669"/>
    <property type="project" value="UniProtKB-UniRule"/>
</dbReference>
<dbReference type="GO" id="GO:0006260">
    <property type="term" value="P:DNA replication"/>
    <property type="evidence" value="ECO:0007669"/>
    <property type="project" value="UniProtKB-UniRule"/>
</dbReference>
<dbReference type="Gene3D" id="6.10.250.2410">
    <property type="match status" value="1"/>
</dbReference>
<dbReference type="Gene3D" id="1.10.10.580">
    <property type="entry name" value="Structural maintenance of chromosome 1. Chain E"/>
    <property type="match status" value="1"/>
</dbReference>
<dbReference type="HAMAP" id="MF_01805">
    <property type="entry name" value="ScpA"/>
    <property type="match status" value="1"/>
</dbReference>
<dbReference type="InterPro" id="IPR003768">
    <property type="entry name" value="ScpA"/>
</dbReference>
<dbReference type="InterPro" id="IPR023093">
    <property type="entry name" value="ScpA-like_C"/>
</dbReference>
<dbReference type="PANTHER" id="PTHR33969">
    <property type="entry name" value="SEGREGATION AND CONDENSATION PROTEIN A"/>
    <property type="match status" value="1"/>
</dbReference>
<dbReference type="PANTHER" id="PTHR33969:SF2">
    <property type="entry name" value="SEGREGATION AND CONDENSATION PROTEIN A"/>
    <property type="match status" value="1"/>
</dbReference>
<dbReference type="Pfam" id="PF02616">
    <property type="entry name" value="SMC_ScpA"/>
    <property type="match status" value="1"/>
</dbReference>
<accession>P60223</accession>
<accession>Q99TZ6</accession>
<name>SCPA_STAAM</name>
<organism>
    <name type="scientific">Staphylococcus aureus (strain Mu50 / ATCC 700699)</name>
    <dbReference type="NCBI Taxonomy" id="158878"/>
    <lineage>
        <taxon>Bacteria</taxon>
        <taxon>Bacillati</taxon>
        <taxon>Bacillota</taxon>
        <taxon>Bacilli</taxon>
        <taxon>Bacillales</taxon>
        <taxon>Staphylococcaceae</taxon>
        <taxon>Staphylococcus</taxon>
    </lineage>
</organism>
<proteinExistence type="inferred from homology"/>
<gene>
    <name evidence="1" type="primary">scpA</name>
    <name type="ordered locus">SAV1495</name>
</gene>
<reference key="1">
    <citation type="journal article" date="2001" name="Lancet">
        <title>Whole genome sequencing of meticillin-resistant Staphylococcus aureus.</title>
        <authorList>
            <person name="Kuroda M."/>
            <person name="Ohta T."/>
            <person name="Uchiyama I."/>
            <person name="Baba T."/>
            <person name="Yuzawa H."/>
            <person name="Kobayashi I."/>
            <person name="Cui L."/>
            <person name="Oguchi A."/>
            <person name="Aoki K."/>
            <person name="Nagai Y."/>
            <person name="Lian J.-Q."/>
            <person name="Ito T."/>
            <person name="Kanamori M."/>
            <person name="Matsumaru H."/>
            <person name="Maruyama A."/>
            <person name="Murakami H."/>
            <person name="Hosoyama A."/>
            <person name="Mizutani-Ui Y."/>
            <person name="Takahashi N.K."/>
            <person name="Sawano T."/>
            <person name="Inoue R."/>
            <person name="Kaito C."/>
            <person name="Sekimizu K."/>
            <person name="Hirakawa H."/>
            <person name="Kuhara S."/>
            <person name="Goto S."/>
            <person name="Yabuzaki J."/>
            <person name="Kanehisa M."/>
            <person name="Yamashita A."/>
            <person name="Oshima K."/>
            <person name="Furuya K."/>
            <person name="Yoshino C."/>
            <person name="Shiba T."/>
            <person name="Hattori M."/>
            <person name="Ogasawara N."/>
            <person name="Hayashi H."/>
            <person name="Hiramatsu K."/>
        </authorList>
    </citation>
    <scope>NUCLEOTIDE SEQUENCE [LARGE SCALE GENOMIC DNA]</scope>
    <source>
        <strain>Mu50 / ATCC 700699</strain>
    </source>
</reference>
<protein>
    <recommendedName>
        <fullName evidence="1">Segregation and condensation protein A</fullName>
    </recommendedName>
</protein>